<gene>
    <name evidence="1" type="primary">gppA</name>
    <name type="ordered locus">KPK_5399</name>
</gene>
<dbReference type="EC" id="3.6.1.40" evidence="1"/>
<dbReference type="EMBL" id="CP000964">
    <property type="protein sequence ID" value="ACI11046.1"/>
    <property type="molecule type" value="Genomic_DNA"/>
</dbReference>
<dbReference type="SMR" id="B5XYZ0"/>
<dbReference type="KEGG" id="kpe:KPK_5399"/>
<dbReference type="HOGENOM" id="CLU_025908_4_0_6"/>
<dbReference type="UniPathway" id="UPA00908">
    <property type="reaction ID" value="UER00885"/>
</dbReference>
<dbReference type="Proteomes" id="UP000001734">
    <property type="component" value="Chromosome"/>
</dbReference>
<dbReference type="GO" id="GO:0008894">
    <property type="term" value="F:guanosine-5'-triphosphate,3'-diphosphate diphosphatase activity"/>
    <property type="evidence" value="ECO:0007669"/>
    <property type="project" value="UniProtKB-UniRule"/>
</dbReference>
<dbReference type="GO" id="GO:0015974">
    <property type="term" value="P:guanosine pentaphosphate catabolic process"/>
    <property type="evidence" value="ECO:0007669"/>
    <property type="project" value="InterPro"/>
</dbReference>
<dbReference type="GO" id="GO:0015970">
    <property type="term" value="P:guanosine tetraphosphate biosynthetic process"/>
    <property type="evidence" value="ECO:0007669"/>
    <property type="project" value="UniProtKB-UniRule"/>
</dbReference>
<dbReference type="GO" id="GO:0015949">
    <property type="term" value="P:nucleobase-containing small molecule interconversion"/>
    <property type="evidence" value="ECO:0007669"/>
    <property type="project" value="TreeGrafter"/>
</dbReference>
<dbReference type="CDD" id="cd24117">
    <property type="entry name" value="ASKHA_NBD_EcGppA-like"/>
    <property type="match status" value="1"/>
</dbReference>
<dbReference type="FunFam" id="1.10.3210.10:FF:000004">
    <property type="entry name" value="Guanosine-5'-triphosphate,3'-diphosphate pyrophosphatase"/>
    <property type="match status" value="1"/>
</dbReference>
<dbReference type="FunFam" id="3.30.420.150:FF:000001">
    <property type="entry name" value="Guanosine-5'-triphosphate,3'-diphosphate pyrophosphatase"/>
    <property type="match status" value="1"/>
</dbReference>
<dbReference type="FunFam" id="3.30.420.40:FF:000023">
    <property type="entry name" value="Guanosine-5'-triphosphate,3'-diphosphate pyrophosphatase"/>
    <property type="match status" value="1"/>
</dbReference>
<dbReference type="Gene3D" id="3.30.420.40">
    <property type="match status" value="1"/>
</dbReference>
<dbReference type="Gene3D" id="3.30.420.150">
    <property type="entry name" value="Exopolyphosphatase. Domain 2"/>
    <property type="match status" value="1"/>
</dbReference>
<dbReference type="Gene3D" id="1.10.3210.10">
    <property type="entry name" value="Hypothetical protein af1432"/>
    <property type="match status" value="1"/>
</dbReference>
<dbReference type="HAMAP" id="MF_01550">
    <property type="entry name" value="GppA"/>
    <property type="match status" value="1"/>
</dbReference>
<dbReference type="InterPro" id="IPR043129">
    <property type="entry name" value="ATPase_NBD"/>
</dbReference>
<dbReference type="InterPro" id="IPR050273">
    <property type="entry name" value="GppA/Ppx_hydrolase"/>
</dbReference>
<dbReference type="InterPro" id="IPR023709">
    <property type="entry name" value="Guo-5TP_3DP_PyrP"/>
</dbReference>
<dbReference type="InterPro" id="IPR048950">
    <property type="entry name" value="Ppx_GppA_C"/>
</dbReference>
<dbReference type="InterPro" id="IPR003695">
    <property type="entry name" value="Ppx_GppA_N"/>
</dbReference>
<dbReference type="InterPro" id="IPR030673">
    <property type="entry name" value="PyroPPase_GppA_Ppx"/>
</dbReference>
<dbReference type="NCBIfam" id="NF008260">
    <property type="entry name" value="PRK11031.1"/>
    <property type="match status" value="1"/>
</dbReference>
<dbReference type="PANTHER" id="PTHR30005">
    <property type="entry name" value="EXOPOLYPHOSPHATASE"/>
    <property type="match status" value="1"/>
</dbReference>
<dbReference type="PANTHER" id="PTHR30005:SF0">
    <property type="entry name" value="RETROGRADE REGULATION PROTEIN 2"/>
    <property type="match status" value="1"/>
</dbReference>
<dbReference type="Pfam" id="PF02541">
    <property type="entry name" value="Ppx-GppA"/>
    <property type="match status" value="1"/>
</dbReference>
<dbReference type="Pfam" id="PF21447">
    <property type="entry name" value="Ppx-GppA_III"/>
    <property type="match status" value="1"/>
</dbReference>
<dbReference type="PIRSF" id="PIRSF001267">
    <property type="entry name" value="Pyrophosphatase_GppA_Ppx"/>
    <property type="match status" value="1"/>
</dbReference>
<dbReference type="SUPFAM" id="SSF53067">
    <property type="entry name" value="Actin-like ATPase domain"/>
    <property type="match status" value="2"/>
</dbReference>
<dbReference type="SUPFAM" id="SSF109604">
    <property type="entry name" value="HD-domain/PDEase-like"/>
    <property type="match status" value="1"/>
</dbReference>
<keyword id="KW-0378">Hydrolase</keyword>
<reference key="1">
    <citation type="journal article" date="2008" name="PLoS Genet.">
        <title>Complete genome sequence of the N2-fixing broad host range endophyte Klebsiella pneumoniae 342 and virulence predictions verified in mice.</title>
        <authorList>
            <person name="Fouts D.E."/>
            <person name="Tyler H.L."/>
            <person name="DeBoy R.T."/>
            <person name="Daugherty S."/>
            <person name="Ren Q."/>
            <person name="Badger J.H."/>
            <person name="Durkin A.S."/>
            <person name="Huot H."/>
            <person name="Shrivastava S."/>
            <person name="Kothari S."/>
            <person name="Dodson R.J."/>
            <person name="Mohamoud Y."/>
            <person name="Khouri H."/>
            <person name="Roesch L.F.W."/>
            <person name="Krogfelt K.A."/>
            <person name="Struve C."/>
            <person name="Triplett E.W."/>
            <person name="Methe B.A."/>
        </authorList>
    </citation>
    <scope>NUCLEOTIDE SEQUENCE [LARGE SCALE GENOMIC DNA]</scope>
    <source>
        <strain>342</strain>
    </source>
</reference>
<comment type="function">
    <text evidence="1">Catalyzes the conversion of pppGpp to ppGpp. Guanosine pentaphosphate (pppGpp) is a cytoplasmic signaling molecule which together with ppGpp controls the 'stringent response', an adaptive process that allows bacteria to respond to amino acid starvation, resulting in the coordinated regulation of numerous cellular activities.</text>
</comment>
<comment type="catalytic activity">
    <reaction evidence="1">
        <text>guanosine 3'-diphosphate 5'-triphosphate + H2O = guanosine 3',5'-bis(diphosphate) + phosphate + H(+)</text>
        <dbReference type="Rhea" id="RHEA:13073"/>
        <dbReference type="ChEBI" id="CHEBI:15377"/>
        <dbReference type="ChEBI" id="CHEBI:15378"/>
        <dbReference type="ChEBI" id="CHEBI:43474"/>
        <dbReference type="ChEBI" id="CHEBI:77828"/>
        <dbReference type="ChEBI" id="CHEBI:142410"/>
        <dbReference type="EC" id="3.6.1.40"/>
    </reaction>
</comment>
<comment type="pathway">
    <text evidence="1">Purine metabolism; ppGpp biosynthesis; ppGpp from GTP: step 2/2.</text>
</comment>
<comment type="similarity">
    <text evidence="1">Belongs to the GppA/Ppx family. GppA subfamily.</text>
</comment>
<proteinExistence type="inferred from homology"/>
<feature type="chain" id="PRO_1000192530" description="Guanosine-5'-triphosphate,3'-diphosphate pyrophosphatase">
    <location>
        <begin position="1"/>
        <end position="499"/>
    </location>
</feature>
<protein>
    <recommendedName>
        <fullName evidence="1">Guanosine-5'-triphosphate,3'-diphosphate pyrophosphatase</fullName>
        <ecNumber evidence="1">3.6.1.40</ecNumber>
    </recommendedName>
    <alternativeName>
        <fullName evidence="1">Guanosine pentaphosphate phosphohydrolase</fullName>
    </alternativeName>
    <alternativeName>
        <fullName evidence="1">pppGpp-5'-phosphohydrolase</fullName>
    </alternativeName>
</protein>
<name>GPPA_KLEP3</name>
<evidence type="ECO:0000255" key="1">
    <source>
        <dbReference type="HAMAP-Rule" id="MF_01550"/>
    </source>
</evidence>
<accession>B5XYZ0</accession>
<organism>
    <name type="scientific">Klebsiella pneumoniae (strain 342)</name>
    <dbReference type="NCBI Taxonomy" id="507522"/>
    <lineage>
        <taxon>Bacteria</taxon>
        <taxon>Pseudomonadati</taxon>
        <taxon>Pseudomonadota</taxon>
        <taxon>Gammaproteobacteria</taxon>
        <taxon>Enterobacterales</taxon>
        <taxon>Enterobacteriaceae</taxon>
        <taxon>Klebsiella/Raoultella group</taxon>
        <taxon>Klebsiella</taxon>
        <taxon>Klebsiella pneumoniae complex</taxon>
    </lineage>
</organism>
<sequence length="499" mass="55167">MSSTSLYAAIDLGSNSFHMLVVREVAGSIQTLSRIKRKVRLAAGLNSDNTLSAEAMERGWQCLRLFAERLQDIPPTQIRVVATATLRLAVNAEEFLAKAQEILGTPVQVISGEEEARLIYQGVAHTTGGADQRLVVDIGGASTELVTGTGAQTTSLFSLSMGCVTWLERYFADRSLTKENFDLAEAAAREVLLPIADVLRYHGWKVCVGASGTVQALQEIMMAQGMDERITLAKLQQLKQRAIQCGRLEELEIEGLTLERALVFPSGLAILIAIFSELNIQCMTLAGGALREGLVYGMLHLSVEQDIRSRTLRNIQRRFMIDTEQAQRVASLASHLLSQLDGSWELDPLSRDLLLSACSLHEIGLSVDFKRAPQHAAYLVNNLDLPGFTPAQKKLIATLLLNQTNAIDLSSLHQQNAVPPRVAEHLCRLLRLAILFASRRRDDLLPAIQLAAHDDQLTLTLPENWLAEHPLGREMVDQECQWQSYVHWTLRVTSGDTPR</sequence>